<dbReference type="EC" id="1.14.13.9" evidence="1"/>
<dbReference type="EMBL" id="AAAB01008960">
    <property type="protein sequence ID" value="EAA11712.2"/>
    <property type="molecule type" value="Genomic_DNA"/>
</dbReference>
<dbReference type="RefSeq" id="XP_315983.2">
    <property type="nucleotide sequence ID" value="XM_315983.4"/>
</dbReference>
<dbReference type="SMR" id="Q7Q6A7"/>
<dbReference type="FunCoup" id="Q7Q6A7">
    <property type="interactions" value="227"/>
</dbReference>
<dbReference type="STRING" id="7165.Q7Q6A7"/>
<dbReference type="PaxDb" id="7165-AGAP005948-PA"/>
<dbReference type="EnsemblMetazoa" id="AGAP005948-RA">
    <property type="protein sequence ID" value="AGAP005948-PA"/>
    <property type="gene ID" value="AGAP005948"/>
</dbReference>
<dbReference type="GeneID" id="1276617"/>
<dbReference type="KEGG" id="aga:1276617"/>
<dbReference type="CTD" id="35724"/>
<dbReference type="VEuPathDB" id="VectorBase:AGAMI1_006493"/>
<dbReference type="VEuPathDB" id="VectorBase:AGAP005948"/>
<dbReference type="eggNOG" id="KOG2614">
    <property type="taxonomic scope" value="Eukaryota"/>
</dbReference>
<dbReference type="HOGENOM" id="CLU_023210_0_1_1"/>
<dbReference type="InParanoid" id="Q7Q6A7"/>
<dbReference type="OMA" id="REFMFIA"/>
<dbReference type="OrthoDB" id="10053569at2759"/>
<dbReference type="PhylomeDB" id="Q7Q6A7"/>
<dbReference type="UniPathway" id="UPA00253">
    <property type="reaction ID" value="UER00328"/>
</dbReference>
<dbReference type="Proteomes" id="UP000007062">
    <property type="component" value="Chromosome 2L"/>
</dbReference>
<dbReference type="GO" id="GO:0005741">
    <property type="term" value="C:mitochondrial outer membrane"/>
    <property type="evidence" value="ECO:0000250"/>
    <property type="project" value="UniProtKB"/>
</dbReference>
<dbReference type="GO" id="GO:0071949">
    <property type="term" value="F:FAD binding"/>
    <property type="evidence" value="ECO:0007669"/>
    <property type="project" value="InterPro"/>
</dbReference>
<dbReference type="GO" id="GO:0004502">
    <property type="term" value="F:kynurenine 3-monooxygenase activity"/>
    <property type="evidence" value="ECO:0000250"/>
    <property type="project" value="UniProtKB"/>
</dbReference>
<dbReference type="GO" id="GO:0034354">
    <property type="term" value="P:'de novo' NAD biosynthetic process from L-tryptophan"/>
    <property type="evidence" value="ECO:0007669"/>
    <property type="project" value="UniProtKB-UniRule"/>
</dbReference>
<dbReference type="GO" id="GO:0043420">
    <property type="term" value="P:anthranilate metabolic process"/>
    <property type="evidence" value="ECO:0007669"/>
    <property type="project" value="UniProtKB-UniRule"/>
</dbReference>
<dbReference type="GO" id="GO:0070189">
    <property type="term" value="P:kynurenine metabolic process"/>
    <property type="evidence" value="ECO:0000318"/>
    <property type="project" value="GO_Central"/>
</dbReference>
<dbReference type="GO" id="GO:0006569">
    <property type="term" value="P:L-tryptophan catabolic process"/>
    <property type="evidence" value="ECO:0007669"/>
    <property type="project" value="UniProtKB-UniRule"/>
</dbReference>
<dbReference type="GO" id="GO:0019674">
    <property type="term" value="P:NAD metabolic process"/>
    <property type="evidence" value="ECO:0000250"/>
    <property type="project" value="UniProtKB"/>
</dbReference>
<dbReference type="GO" id="GO:0019805">
    <property type="term" value="P:quinolinate biosynthetic process"/>
    <property type="evidence" value="ECO:0007669"/>
    <property type="project" value="UniProtKB-UniRule"/>
</dbReference>
<dbReference type="FunFam" id="3.50.50.60:FF:000129">
    <property type="entry name" value="Kynurenine 3-monooxygenase"/>
    <property type="match status" value="1"/>
</dbReference>
<dbReference type="Gene3D" id="3.50.50.60">
    <property type="entry name" value="FAD/NAD(P)-binding domain"/>
    <property type="match status" value="1"/>
</dbReference>
<dbReference type="HAMAP" id="MF_01971">
    <property type="entry name" value="Kynurenine_monooxygenase"/>
    <property type="match status" value="1"/>
</dbReference>
<dbReference type="InterPro" id="IPR002938">
    <property type="entry name" value="FAD-bd"/>
</dbReference>
<dbReference type="InterPro" id="IPR036188">
    <property type="entry name" value="FAD/NAD-bd_sf"/>
</dbReference>
<dbReference type="InterPro" id="IPR027545">
    <property type="entry name" value="Kynurenine_monooxygenase"/>
</dbReference>
<dbReference type="PANTHER" id="PTHR46028">
    <property type="entry name" value="KYNURENINE 3-MONOOXYGENASE"/>
    <property type="match status" value="1"/>
</dbReference>
<dbReference type="PANTHER" id="PTHR46028:SF2">
    <property type="entry name" value="KYNURENINE 3-MONOOXYGENASE"/>
    <property type="match status" value="1"/>
</dbReference>
<dbReference type="Pfam" id="PF01494">
    <property type="entry name" value="FAD_binding_3"/>
    <property type="match status" value="1"/>
</dbReference>
<dbReference type="PRINTS" id="PR00420">
    <property type="entry name" value="RNGMNOXGNASE"/>
</dbReference>
<dbReference type="SUPFAM" id="SSF51905">
    <property type="entry name" value="FAD/NAD(P)-binding domain"/>
    <property type="match status" value="1"/>
</dbReference>
<gene>
    <name type="primary">kh</name>
    <name type="ORF">AGAP005948</name>
</gene>
<evidence type="ECO:0000255" key="1">
    <source>
        <dbReference type="HAMAP-Rule" id="MF_03018"/>
    </source>
</evidence>
<sequence>MATASDSKYKRTNTNGMQHQPLDVAIVGGGLVGSLLALHLGKKGHEVNLYEYREDIRTAELVIGRSINLALSARGRRALAEVGLEDALLNHGIPMSGRMLHDVNGKCKIVPYDANTNQCIYSVGRKHLNEVLLNAAEKYPNIHLHFNHKLVSANLDEGNLSMVDPVTKDVKSARADLIVGCDGAYSAVRKEIVKRPRYDFSQTYIEHGYLELCIPPTAGGEFAMPHNYLHIWPRGQFMMIALPNQDRTWTVTLFMPFTQFHSITDQGLLLDFFRQHFPDAIELIGRERLVKDFFKTKAQPLVMIKCRPYHIGAKALIIGDAAHAMVPFYGQGMNAGFEDCSVLTELFNQYGTDLARILPEFSEKRWEDAHAICDLAMYNYIEMRDLVTKRSYLLRKKLDELLFWMMPNTWVPLYNSVSFSHMRYSKCIANRAWQDKILTRVLYGASIASVAAIGGLCYRHVTMGHLERLSTRILSTFQLLKPKASV</sequence>
<feature type="chain" id="PRO_0000361913" description="Kynurenine 3-monooxygenase">
    <location>
        <begin position="1"/>
        <end position="486"/>
    </location>
</feature>
<feature type="transmembrane region" description="Helical" evidence="1">
    <location>
        <begin position="401"/>
        <end position="424"/>
    </location>
</feature>
<feature type="transmembrane region" description="Helical" evidence="1">
    <location>
        <begin position="437"/>
        <end position="459"/>
    </location>
</feature>
<proteinExistence type="inferred from homology"/>
<accession>Q7Q6A7</accession>
<organism>
    <name type="scientific">Anopheles gambiae</name>
    <name type="common">African malaria mosquito</name>
    <dbReference type="NCBI Taxonomy" id="7165"/>
    <lineage>
        <taxon>Eukaryota</taxon>
        <taxon>Metazoa</taxon>
        <taxon>Ecdysozoa</taxon>
        <taxon>Arthropoda</taxon>
        <taxon>Hexapoda</taxon>
        <taxon>Insecta</taxon>
        <taxon>Pterygota</taxon>
        <taxon>Neoptera</taxon>
        <taxon>Endopterygota</taxon>
        <taxon>Diptera</taxon>
        <taxon>Nematocera</taxon>
        <taxon>Culicoidea</taxon>
        <taxon>Culicidae</taxon>
        <taxon>Anophelinae</taxon>
        <taxon>Anopheles</taxon>
    </lineage>
</organism>
<comment type="function">
    <text evidence="1">Catalyzes the hydroxylation of L-kynurenine (L-Kyn) to form 3-hydroxy-L-kynurenine (L-3OHKyn). Required for synthesis of quinolinic acid.</text>
</comment>
<comment type="catalytic activity">
    <reaction evidence="1">
        <text>L-kynurenine + NADPH + O2 + H(+) = 3-hydroxy-L-kynurenine + NADP(+) + H2O</text>
        <dbReference type="Rhea" id="RHEA:20545"/>
        <dbReference type="ChEBI" id="CHEBI:15377"/>
        <dbReference type="ChEBI" id="CHEBI:15378"/>
        <dbReference type="ChEBI" id="CHEBI:15379"/>
        <dbReference type="ChEBI" id="CHEBI:57783"/>
        <dbReference type="ChEBI" id="CHEBI:57959"/>
        <dbReference type="ChEBI" id="CHEBI:58125"/>
        <dbReference type="ChEBI" id="CHEBI:58349"/>
        <dbReference type="EC" id="1.14.13.9"/>
    </reaction>
</comment>
<comment type="cofactor">
    <cofactor evidence="1">
        <name>FAD</name>
        <dbReference type="ChEBI" id="CHEBI:57692"/>
    </cofactor>
</comment>
<comment type="pathway">
    <text evidence="1">Cofactor biosynthesis; NAD(+) biosynthesis; quinolinate from L-kynurenine: step 1/3.</text>
</comment>
<comment type="subcellular location">
    <subcellularLocation>
        <location evidence="1">Mitochondrion</location>
    </subcellularLocation>
    <subcellularLocation>
        <location evidence="1">Membrane</location>
        <topology evidence="1">Multi-pass membrane protein</topology>
    </subcellularLocation>
</comment>
<comment type="similarity">
    <text evidence="1">Belongs to the aromatic-ring hydroxylase family. KMO subfamily.</text>
</comment>
<keyword id="KW-0274">FAD</keyword>
<keyword id="KW-0285">Flavoprotein</keyword>
<keyword id="KW-0472">Membrane</keyword>
<keyword id="KW-0496">Mitochondrion</keyword>
<keyword id="KW-0503">Monooxygenase</keyword>
<keyword id="KW-0521">NADP</keyword>
<keyword id="KW-0560">Oxidoreductase</keyword>
<keyword id="KW-0662">Pyridine nucleotide biosynthesis</keyword>
<keyword id="KW-1185">Reference proteome</keyword>
<keyword id="KW-0812">Transmembrane</keyword>
<keyword id="KW-1133">Transmembrane helix</keyword>
<name>KMO_ANOGA</name>
<reference key="1">
    <citation type="journal article" date="2002" name="Science">
        <title>The genome sequence of the malaria mosquito Anopheles gambiae.</title>
        <authorList>
            <person name="Holt R.A."/>
            <person name="Subramanian G.M."/>
            <person name="Halpern A."/>
            <person name="Sutton G.G."/>
            <person name="Charlab R."/>
            <person name="Nusskern D.R."/>
            <person name="Wincker P."/>
            <person name="Clark A.G."/>
            <person name="Ribeiro J.M.C."/>
            <person name="Wides R."/>
            <person name="Salzberg S.L."/>
            <person name="Loftus B.J."/>
            <person name="Yandell M.D."/>
            <person name="Majoros W.H."/>
            <person name="Rusch D.B."/>
            <person name="Lai Z."/>
            <person name="Kraft C.L."/>
            <person name="Abril J.F."/>
            <person name="Anthouard V."/>
            <person name="Arensburger P."/>
            <person name="Atkinson P.W."/>
            <person name="Baden H."/>
            <person name="de Berardinis V."/>
            <person name="Baldwin D."/>
            <person name="Benes V."/>
            <person name="Biedler J."/>
            <person name="Blass C."/>
            <person name="Bolanos R."/>
            <person name="Boscus D."/>
            <person name="Barnstead M."/>
            <person name="Cai S."/>
            <person name="Center A."/>
            <person name="Chaturverdi K."/>
            <person name="Christophides G.K."/>
            <person name="Chrystal M.A.M."/>
            <person name="Clamp M."/>
            <person name="Cravchik A."/>
            <person name="Curwen V."/>
            <person name="Dana A."/>
            <person name="Delcher A."/>
            <person name="Dew I."/>
            <person name="Evans C.A."/>
            <person name="Flanigan M."/>
            <person name="Grundschober-Freimoser A."/>
            <person name="Friedli L."/>
            <person name="Gu Z."/>
            <person name="Guan P."/>
            <person name="Guigo R."/>
            <person name="Hillenmeyer M.E."/>
            <person name="Hladun S.L."/>
            <person name="Hogan J.R."/>
            <person name="Hong Y.S."/>
            <person name="Hoover J."/>
            <person name="Jaillon O."/>
            <person name="Ke Z."/>
            <person name="Kodira C.D."/>
            <person name="Kokoza E."/>
            <person name="Koutsos A."/>
            <person name="Letunic I."/>
            <person name="Levitsky A.A."/>
            <person name="Liang Y."/>
            <person name="Lin J.-J."/>
            <person name="Lobo N.F."/>
            <person name="Lopez J.R."/>
            <person name="Malek J.A."/>
            <person name="McIntosh T.C."/>
            <person name="Meister S."/>
            <person name="Miller J.R."/>
            <person name="Mobarry C."/>
            <person name="Mongin E."/>
            <person name="Murphy S.D."/>
            <person name="O'Brochta D.A."/>
            <person name="Pfannkoch C."/>
            <person name="Qi R."/>
            <person name="Regier M.A."/>
            <person name="Remington K."/>
            <person name="Shao H."/>
            <person name="Sharakhova M.V."/>
            <person name="Sitter C.D."/>
            <person name="Shetty J."/>
            <person name="Smith T.J."/>
            <person name="Strong R."/>
            <person name="Sun J."/>
            <person name="Thomasova D."/>
            <person name="Ton L.Q."/>
            <person name="Topalis P."/>
            <person name="Tu Z.J."/>
            <person name="Unger M.F."/>
            <person name="Walenz B."/>
            <person name="Wang A.H."/>
            <person name="Wang J."/>
            <person name="Wang M."/>
            <person name="Wang X."/>
            <person name="Woodford K.J."/>
            <person name="Wortman J.R."/>
            <person name="Wu M."/>
            <person name="Yao A."/>
            <person name="Zdobnov E.M."/>
            <person name="Zhang H."/>
            <person name="Zhao Q."/>
            <person name="Zhao S."/>
            <person name="Zhu S.C."/>
            <person name="Zhimulev I."/>
            <person name="Coluzzi M."/>
            <person name="della Torre A."/>
            <person name="Roth C.W."/>
            <person name="Louis C."/>
            <person name="Kalush F."/>
            <person name="Mural R.J."/>
            <person name="Myers E.W."/>
            <person name="Adams M.D."/>
            <person name="Smith H.O."/>
            <person name="Broder S."/>
            <person name="Gardner M.J."/>
            <person name="Fraser C.M."/>
            <person name="Birney E."/>
            <person name="Bork P."/>
            <person name="Brey P.T."/>
            <person name="Venter J.C."/>
            <person name="Weissenbach J."/>
            <person name="Kafatos F.C."/>
            <person name="Collins F.H."/>
            <person name="Hoffman S.L."/>
        </authorList>
    </citation>
    <scope>NUCLEOTIDE SEQUENCE [LARGE SCALE GENOMIC DNA]</scope>
    <source>
        <strain>PEST</strain>
    </source>
</reference>
<protein>
    <recommendedName>
        <fullName evidence="1">Kynurenine 3-monooxygenase</fullName>
        <ecNumber evidence="1">1.14.13.9</ecNumber>
    </recommendedName>
    <alternativeName>
        <fullName evidence="1">Kynurenine 3-hydroxylase</fullName>
    </alternativeName>
</protein>